<protein>
    <recommendedName>
        <fullName evidence="7">Polycomb group protein FERTILIZATION-INDEPENDENT SEED 2</fullName>
    </recommendedName>
</protein>
<feature type="chain" id="PRO_0000435364" description="Polycomb group protein FERTILIZATION-INDEPENDENT SEED 2">
    <location>
        <begin position="1"/>
        <end position="813"/>
    </location>
</feature>
<feature type="repeat" description="A-1" evidence="6">
    <location>
        <begin position="243"/>
        <end position="264"/>
    </location>
</feature>
<feature type="repeat" description="B-1" evidence="6">
    <location>
        <begin position="265"/>
        <end position="281"/>
    </location>
</feature>
<feature type="repeat" description="A-2" evidence="6">
    <location>
        <begin position="282"/>
        <end position="304"/>
    </location>
</feature>
<feature type="repeat" description="A-3" evidence="6">
    <location>
        <begin position="305"/>
        <end position="327"/>
    </location>
</feature>
<feature type="repeat" description="A-4" evidence="6">
    <location>
        <begin position="328"/>
        <end position="349"/>
    </location>
</feature>
<feature type="repeat" description="A-5" evidence="6">
    <location>
        <begin position="350"/>
        <end position="371"/>
    </location>
</feature>
<feature type="repeat" description="B-2" evidence="6">
    <location>
        <begin position="372"/>
        <end position="388"/>
    </location>
</feature>
<feature type="repeat" description="B-3" evidence="6">
    <location>
        <begin position="403"/>
        <end position="419"/>
    </location>
</feature>
<feature type="repeat" description="A-6" evidence="6">
    <location>
        <begin position="420"/>
        <end position="441"/>
    </location>
</feature>
<feature type="repeat" description="B-4" evidence="6">
    <location>
        <begin position="442"/>
        <end position="458"/>
    </location>
</feature>
<feature type="repeat" description="A-7" evidence="6">
    <location>
        <begin position="459"/>
        <end position="481"/>
    </location>
</feature>
<feature type="repeat" description="A-8" evidence="6">
    <location>
        <begin position="482"/>
        <end position="502"/>
    </location>
</feature>
<feature type="repeat" description="B-5" evidence="6">
    <location>
        <begin position="503"/>
        <end position="519"/>
    </location>
</feature>
<feature type="repeat" description="A-9" evidence="6">
    <location>
        <begin position="520"/>
        <end position="542"/>
    </location>
</feature>
<feature type="repeat" description="A-10" evidence="6">
    <location>
        <begin position="543"/>
        <end position="563"/>
    </location>
</feature>
<feature type="repeat" description="B-6" evidence="6">
    <location>
        <begin position="564"/>
        <end position="579"/>
    </location>
</feature>
<feature type="repeat" description="A-11" evidence="6">
    <location>
        <begin position="580"/>
        <end position="601"/>
    </location>
</feature>
<feature type="repeat" description="A-12" evidence="6">
    <location>
        <begin position="602"/>
        <end position="623"/>
    </location>
</feature>
<feature type="repeat" description="B-7" evidence="6">
    <location>
        <begin position="624"/>
        <end position="640"/>
    </location>
</feature>
<feature type="zinc finger region" description="C2H2-type" evidence="2">
    <location>
        <begin position="134"/>
        <end position="155"/>
    </location>
</feature>
<feature type="region of interest" description="Disordered" evidence="3">
    <location>
        <begin position="1"/>
        <end position="27"/>
    </location>
</feature>
<feature type="region of interest" description="Disordered" evidence="3">
    <location>
        <begin position="197"/>
        <end position="216"/>
    </location>
</feature>
<feature type="region of interest" description="Disordered" evidence="3">
    <location>
        <begin position="232"/>
        <end position="261"/>
    </location>
</feature>
<feature type="region of interest" description="12 X approximate repeat A" evidence="6">
    <location>
        <begin position="243"/>
        <end position="542"/>
    </location>
</feature>
<feature type="region of interest" description="7 X approximate repeat B" evidence="6">
    <location>
        <begin position="265"/>
        <end position="640"/>
    </location>
</feature>
<feature type="region of interest" description="Disordered" evidence="3">
    <location>
        <begin position="274"/>
        <end position="648"/>
    </location>
</feature>
<feature type="region of interest" description="VEFS-box" evidence="2">
    <location>
        <begin position="648"/>
        <end position="783"/>
    </location>
</feature>
<feature type="compositionally biased region" description="Acidic residues" evidence="3">
    <location>
        <begin position="15"/>
        <end position="26"/>
    </location>
</feature>
<feature type="compositionally biased region" description="Basic and acidic residues" evidence="3">
    <location>
        <begin position="232"/>
        <end position="246"/>
    </location>
</feature>
<feature type="compositionally biased region" description="Basic and acidic residues" evidence="3">
    <location>
        <begin position="296"/>
        <end position="307"/>
    </location>
</feature>
<feature type="compositionally biased region" description="Basic and acidic residues" evidence="3">
    <location>
        <begin position="319"/>
        <end position="331"/>
    </location>
</feature>
<feature type="compositionally biased region" description="Basic and acidic residues" evidence="3">
    <location>
        <begin position="344"/>
        <end position="353"/>
    </location>
</feature>
<feature type="compositionally biased region" description="Basic residues" evidence="3">
    <location>
        <begin position="388"/>
        <end position="402"/>
    </location>
</feature>
<feature type="compositionally biased region" description="Basic and acidic residues" evidence="3">
    <location>
        <begin position="414"/>
        <end position="423"/>
    </location>
</feature>
<feature type="compositionally biased region" description="Basic and acidic residues" evidence="3">
    <location>
        <begin position="453"/>
        <end position="462"/>
    </location>
</feature>
<feature type="compositionally biased region" description="Basic residues" evidence="3">
    <location>
        <begin position="472"/>
        <end position="481"/>
    </location>
</feature>
<feature type="compositionally biased region" description="Polar residues" evidence="3">
    <location>
        <begin position="501"/>
        <end position="512"/>
    </location>
</feature>
<feature type="compositionally biased region" description="Basic and acidic residues" evidence="3">
    <location>
        <begin position="514"/>
        <end position="523"/>
    </location>
</feature>
<feature type="compositionally biased region" description="Basic and acidic residues" evidence="3">
    <location>
        <begin position="574"/>
        <end position="586"/>
    </location>
</feature>
<feature type="compositionally biased region" description="Basic residues" evidence="3">
    <location>
        <begin position="593"/>
        <end position="602"/>
    </location>
</feature>
<feature type="mutagenesis site" description="In fis2-4; induces atrophy of partially developing seeds beyond the globular stage." evidence="6">
    <location>
        <begin position="758"/>
        <end position="813"/>
    </location>
</feature>
<feature type="sequence conflict" description="In Ref. 1; ABB84250." evidence="8" ref="1">
    <original>H</original>
    <variation>N</variation>
    <location>
        <position position="533"/>
    </location>
</feature>
<gene>
    <name evidence="7" type="primary">FIS2</name>
</gene>
<proteinExistence type="evidence at protein level"/>
<reference key="1">
    <citation type="journal article" date="2006" name="Proc. Natl. Acad. Sci. U.S.A.">
        <title>Partially redundant functions of two SET-domain polycomb-group proteins in controlling initiation of seed development in Arabidopsis.</title>
        <authorList>
            <person name="Wang D."/>
            <person name="Tyson M.D."/>
            <person name="Jackson S.S."/>
            <person name="Yadegari R."/>
        </authorList>
    </citation>
    <scope>NUCLEOTIDE SEQUENCE [MRNA]</scope>
    <source>
        <strain>cv. Landsberg erecta</strain>
    </source>
</reference>
<reference key="2">
    <citation type="journal article" date="1999" name="Proc. Natl. Acad. Sci. U.S.A.">
        <title>Genes controlling fertilization-independent seed development in Arabidopsis thaliana.</title>
        <authorList>
            <person name="Luo M."/>
            <person name="Bilodeau P."/>
            <person name="Koltunow A."/>
            <person name="Dennis E.S."/>
            <person name="Peacock W.J."/>
            <person name="Chaudhury A."/>
        </authorList>
    </citation>
    <scope>NUCLEOTIDE SEQUENCE [GENOMIC DNA / MRNA] OF 87-813</scope>
    <scope>MUTAGENESIS OF 758-TRP--GLU-813</scope>
    <source>
        <strain>cv. Landsberg erecta</strain>
        <tissue>Silique</tissue>
    </source>
</reference>
<reference key="3">
    <citation type="journal article" date="2000" name="Proc. Natl. Acad. Sci. U.S.A.">
        <title>Expression and parent-of-origin effects for FIS2, MEA, and FIE in the endosperm and embryo of developing Arabidopsis seeds.</title>
        <authorList>
            <person name="Luo M."/>
            <person name="Bilodeau P."/>
            <person name="Dennis E.S."/>
            <person name="Peacock W.J."/>
            <person name="Chaudhury A."/>
        </authorList>
    </citation>
    <scope>SUBCELLULAR LOCATION</scope>
    <scope>TISSUE SPECIFICITY</scope>
    <scope>DEVELOPMENTAL STAGE</scope>
</reference>
<reference key="4">
    <citation type="journal article" date="2004" name="Development">
        <title>Identification of new members of fertilisation independent seed Polycomb group pathway involved in the control of seed development in Arabidopsis thaliana.</title>
        <authorList>
            <person name="Guitton A.-E."/>
            <person name="Page D.R."/>
            <person name="Chambrier P."/>
            <person name="Lionnet C."/>
            <person name="Faure J.-E."/>
            <person name="Grossniklaus U."/>
            <person name="Berger F."/>
        </authorList>
    </citation>
    <scope>FUNCTION</scope>
</reference>
<organism>
    <name type="scientific">Arabidopsis thaliana</name>
    <name type="common">Mouse-ear cress</name>
    <dbReference type="NCBI Taxonomy" id="3702"/>
    <lineage>
        <taxon>Eukaryota</taxon>
        <taxon>Viridiplantae</taxon>
        <taxon>Streptophyta</taxon>
        <taxon>Embryophyta</taxon>
        <taxon>Tracheophyta</taxon>
        <taxon>Spermatophyta</taxon>
        <taxon>Magnoliopsida</taxon>
        <taxon>eudicotyledons</taxon>
        <taxon>Gunneridae</taxon>
        <taxon>Pentapetalae</taxon>
        <taxon>rosids</taxon>
        <taxon>malvids</taxon>
        <taxon>Brassicales</taxon>
        <taxon>Brassicaceae</taxon>
        <taxon>Camelineae</taxon>
        <taxon>Arabidopsis</taxon>
    </lineage>
</organism>
<evidence type="ECO:0000250" key="1">
    <source>
        <dbReference type="UniProtKB" id="Q8W5B1"/>
    </source>
</evidence>
<evidence type="ECO:0000255" key="2"/>
<evidence type="ECO:0000256" key="3">
    <source>
        <dbReference type="SAM" id="MobiDB-lite"/>
    </source>
</evidence>
<evidence type="ECO:0000269" key="4">
    <source>
    </source>
</evidence>
<evidence type="ECO:0000269" key="5">
    <source>
    </source>
</evidence>
<evidence type="ECO:0000269" key="6">
    <source>
    </source>
</evidence>
<evidence type="ECO:0000303" key="7">
    <source>
    </source>
</evidence>
<evidence type="ECO:0000305" key="8"/>
<keyword id="KW-0217">Developmental protein</keyword>
<keyword id="KW-0479">Metal-binding</keyword>
<keyword id="KW-0539">Nucleus</keyword>
<keyword id="KW-0677">Repeat</keyword>
<keyword id="KW-0678">Repressor</keyword>
<keyword id="KW-0804">Transcription</keyword>
<keyword id="KW-0805">Transcription regulation</keyword>
<keyword id="KW-0862">Zinc</keyword>
<keyword id="KW-0863">Zinc-finger</keyword>
<accession>P0DKJ7</accession>
<accession>Q0QMM9</accession>
<accession>Q9ZNT9</accession>
<accession>Q9ZQP0</accession>
<sequence>MARKSIRGKEVVMVSDDDDDDDDVDDDKNIIKCVKPLTVYKNLETPTDSDDNDDDDDDVDVDENIIKYIKPVAVYKKLETRSKNNPYFLRRSLKYIIQAKKKKKSNSGGKIRFNYRDVSNKMTLKAEVVENFSCPFCLIPCGGHEGLQLHLKSSHDAFKFEFYRAEKDHGPEVDVSVKSDTIKFGVLKDDVGNPQLSPLTFCSKNRNQRRQRDDSNNVKKLNVLLMELDLDDLPRGTENDSTHVNDDNVSSPPRAHSSEKISDILTTTQLAIAESSEPKVPHVNDGNVSSPPRAHSSAEKNESTHVNDDDDVSSPPRAHSLEKNESTHVNEDNISSPPKAHSSKKNESTHMNDEDVSFPPRTRSSKETSDILTTTQPAIVEPSEPKVRRGSRRKQLYAKRYKARETQPAIAESSEPKVLHVNDENVSSPPEAHSLEKASDILTTTQPAIAESSEPKVPHVNDENVSSTPRAHSSKKNKSTRKNVDNVPSPPKTRSSKKTSDILTTTQPTIAESSEPKVRHVNDDNVSSTPRAHSSKKNKSTRKNDDNIPSPPKTRSSKKTSNILTRTQPAIAESEPKVPHVNDDKVSSTPRAHSSKKNKSTHKKDDNASLPPKTRSSKKTSDILATTQPAKAEPSEPKVTRVSRRKELHAERCEAKRLERLKGRQFYHSQTMQPMTFEQVMSNEDSENETDDYALDISERLRLERLVGVSKEEKRYMYLWNIFVRKQRVIADGHVPWACEEFAKLHKEEMKNSSSFDWWWRMFRIKLWNNGLICAKTFHKCTTILLSNSDEAGQFTSGSAANANNQQSMEVDE</sequence>
<comment type="function">
    <text evidence="5">Polycomb group (PcG) protein. PcG proteins act by forming multiprotein complexes, which are required to maintain the transcriptionally repressive state of homeotic genes throughout development. PcG proteins are not required to initiate repression, but to maintain it during later stages of development. They probably act via the methylation of histones, rendering chromatin heritably changed in its expressibility. Required to prevent the proliferation of the central cell by repressing unknown target genes before fertilization. Regulates the anteroposterior organization of the endosperm.</text>
</comment>
<comment type="subunit">
    <text evidence="1">Probably indirectly associated with FIE and/or MEA. In plants, PcG complexes are probably composed of a member of the EZ family (CLF or MEA), FIE, and a member of the VEFS family (FIS2, VRN2 or EMF2).</text>
</comment>
<comment type="subcellular location">
    <subcellularLocation>
        <location evidence="4">Nucleus</location>
    </subcellularLocation>
</comment>
<comment type="tissue specificity">
    <text evidence="4">Weakly expressed. Expressed in late siliques.</text>
</comment>
<comment type="developmental stage">
    <text evidence="4">Expressed maternally and zygotically. Expressed in the central cell before fertilization, and in the endosperm after fertilization, then decreases before the time of endosperm cellularization but continues in the chalazal cyst.</text>
</comment>
<comment type="similarity">
    <text evidence="8">Belongs to the VEFS (VRN2-EMF2-FIS2-SU(Z)12) family.</text>
</comment>
<comment type="caution">
    <text evidence="8">In cv. Columbia (AC P0DKJ8), the sequence differs from that shown due to a deletion in the genomic sequence that remove 60 residues after the Asn-562.</text>
</comment>
<comment type="sequence caution" evidence="8">
    <conflict type="erroneous gene model prediction">
        <sequence resource="EMBL-CDS" id="AAD09104"/>
    </conflict>
</comment>
<comment type="sequence caution" evidence="8">
    <conflict type="erroneous initiation">
        <sequence resource="EMBL-CDS" id="AAD09105"/>
    </conflict>
    <text>Truncated N-terminus.</text>
</comment>
<name>FIS2L_ARATH</name>
<dbReference type="EMBL" id="DQ275158">
    <property type="protein sequence ID" value="ABB84250.1"/>
    <property type="molecule type" value="mRNA"/>
</dbReference>
<dbReference type="EMBL" id="AF096095">
    <property type="protein sequence ID" value="AAD09104.1"/>
    <property type="status" value="ALT_SEQ"/>
    <property type="molecule type" value="Genomic_DNA"/>
</dbReference>
<dbReference type="EMBL" id="AF096096">
    <property type="protein sequence ID" value="AAD09105.1"/>
    <property type="status" value="ALT_INIT"/>
    <property type="molecule type" value="mRNA"/>
</dbReference>
<dbReference type="PIR" id="E84771">
    <property type="entry name" value="E84771"/>
</dbReference>
<dbReference type="ExpressionAtlas" id="P0DKJ7">
    <property type="expression patterns" value="baseline and differential"/>
</dbReference>
<dbReference type="GO" id="GO:0005634">
    <property type="term" value="C:nucleus"/>
    <property type="evidence" value="ECO:0007669"/>
    <property type="project" value="UniProtKB-SubCell"/>
</dbReference>
<dbReference type="GO" id="GO:0008270">
    <property type="term" value="F:zinc ion binding"/>
    <property type="evidence" value="ECO:0007669"/>
    <property type="project" value="UniProtKB-KW"/>
</dbReference>
<dbReference type="CDD" id="cd21553">
    <property type="entry name" value="VEFS-box_EMF2-like"/>
    <property type="match status" value="1"/>
</dbReference>
<dbReference type="CDD" id="cd21749">
    <property type="entry name" value="ZnB-Zn_EMF2-like"/>
    <property type="match status" value="1"/>
</dbReference>
<dbReference type="InterPro" id="IPR019135">
    <property type="entry name" value="Polycomb_protein_VEFS-Box"/>
</dbReference>
<dbReference type="PANTHER" id="PTHR22597">
    <property type="entry name" value="POLYCOMB GROUP PROTEIN"/>
    <property type="match status" value="1"/>
</dbReference>
<dbReference type="PANTHER" id="PTHR22597:SF24">
    <property type="entry name" value="POLYCOMB GROUP PROTEIN FERTILIZATION-INDEPENDENT SEED 2"/>
    <property type="match status" value="1"/>
</dbReference>
<dbReference type="Pfam" id="PF09733">
    <property type="entry name" value="VEFS-Box"/>
    <property type="match status" value="1"/>
</dbReference>
<dbReference type="Pfam" id="PF23320">
    <property type="entry name" value="Zn_SUZ12"/>
    <property type="match status" value="1"/>
</dbReference>
<dbReference type="PROSITE" id="PS00028">
    <property type="entry name" value="ZINC_FINGER_C2H2_1"/>
    <property type="match status" value="1"/>
</dbReference>